<feature type="signal peptide" evidence="1">
    <location>
        <begin position="1"/>
        <end position="32"/>
    </location>
</feature>
<feature type="chain" id="PRO_0000311430" description="Olfactomedin-like protein 2A">
    <location>
        <begin position="33"/>
        <end position="650"/>
    </location>
</feature>
<feature type="domain" description="Olfactomedin-like" evidence="3">
    <location>
        <begin position="393"/>
        <end position="650"/>
    </location>
</feature>
<feature type="region of interest" description="Disordered" evidence="4">
    <location>
        <begin position="214"/>
        <end position="289"/>
    </location>
</feature>
<feature type="region of interest" description="Disordered" evidence="4">
    <location>
        <begin position="318"/>
        <end position="406"/>
    </location>
</feature>
<feature type="coiled-coil region" evidence="2">
    <location>
        <begin position="163"/>
        <end position="188"/>
    </location>
</feature>
<feature type="compositionally biased region" description="Basic and acidic residues" evidence="4">
    <location>
        <begin position="249"/>
        <end position="274"/>
    </location>
</feature>
<feature type="compositionally biased region" description="Basic and acidic residues" evidence="4">
    <location>
        <begin position="329"/>
        <end position="345"/>
    </location>
</feature>
<feature type="compositionally biased region" description="Low complexity" evidence="4">
    <location>
        <begin position="357"/>
        <end position="370"/>
    </location>
</feature>
<feature type="compositionally biased region" description="Pro residues" evidence="4">
    <location>
        <begin position="371"/>
        <end position="386"/>
    </location>
</feature>
<feature type="site" description="Cleavage" evidence="1">
    <location>
        <begin position="300"/>
        <end position="301"/>
    </location>
</feature>
<feature type="disulfide bond" evidence="3">
    <location>
        <begin position="394"/>
        <end position="580"/>
    </location>
</feature>
<feature type="sequence conflict" description="In Ref. 1; BAF45333." evidence="5" ref="1">
    <location>
        <position position="475"/>
    </location>
</feature>
<dbReference type="EMBL" id="AP009124">
    <property type="protein sequence ID" value="BAF45333.1"/>
    <property type="status" value="ALT_SEQ"/>
    <property type="molecule type" value="Genomic_DNA"/>
</dbReference>
<dbReference type="EMBL" id="CU468031">
    <property type="status" value="NOT_ANNOTATED_CDS"/>
    <property type="molecule type" value="Genomic_DNA"/>
</dbReference>
<dbReference type="SMR" id="A2BD09"/>
<dbReference type="FunCoup" id="A2BD09">
    <property type="interactions" value="362"/>
</dbReference>
<dbReference type="STRING" id="9823.ENSSSCP00000071173"/>
<dbReference type="GlyGen" id="A2BD09">
    <property type="glycosylation" value="2 sites"/>
</dbReference>
<dbReference type="PaxDb" id="9823-ENSSSCP00000005990"/>
<dbReference type="eggNOG" id="KOG3545">
    <property type="taxonomic scope" value="Eukaryota"/>
</dbReference>
<dbReference type="InParanoid" id="A2BD09"/>
<dbReference type="TreeFam" id="TF351220"/>
<dbReference type="Proteomes" id="UP000008227">
    <property type="component" value="Unplaced"/>
</dbReference>
<dbReference type="Proteomes" id="UP000314985">
    <property type="component" value="Unplaced"/>
</dbReference>
<dbReference type="Proteomes" id="UP000694570">
    <property type="component" value="Unplaced"/>
</dbReference>
<dbReference type="Proteomes" id="UP000694571">
    <property type="component" value="Unplaced"/>
</dbReference>
<dbReference type="Proteomes" id="UP000694720">
    <property type="component" value="Unplaced"/>
</dbReference>
<dbReference type="Proteomes" id="UP000694722">
    <property type="component" value="Unplaced"/>
</dbReference>
<dbReference type="Proteomes" id="UP000694723">
    <property type="component" value="Unplaced"/>
</dbReference>
<dbReference type="Proteomes" id="UP000694724">
    <property type="component" value="Unplaced"/>
</dbReference>
<dbReference type="Proteomes" id="UP000694725">
    <property type="component" value="Unplaced"/>
</dbReference>
<dbReference type="Proteomes" id="UP000694726">
    <property type="component" value="Unplaced"/>
</dbReference>
<dbReference type="Proteomes" id="UP000694727">
    <property type="component" value="Unplaced"/>
</dbReference>
<dbReference type="Proteomes" id="UP000694728">
    <property type="component" value="Unplaced"/>
</dbReference>
<dbReference type="GO" id="GO:0005615">
    <property type="term" value="C:extracellular space"/>
    <property type="evidence" value="ECO:0000318"/>
    <property type="project" value="GO_Central"/>
</dbReference>
<dbReference type="GO" id="GO:0007165">
    <property type="term" value="P:signal transduction"/>
    <property type="evidence" value="ECO:0000318"/>
    <property type="project" value="GO_Central"/>
</dbReference>
<dbReference type="InterPro" id="IPR003112">
    <property type="entry name" value="Olfac-like_dom"/>
</dbReference>
<dbReference type="InterPro" id="IPR050605">
    <property type="entry name" value="Olfactomedin-like_domain"/>
</dbReference>
<dbReference type="PANTHER" id="PTHR23192:SF29">
    <property type="entry name" value="OLFACTOMEDIN-LIKE PROTEIN 2A"/>
    <property type="match status" value="1"/>
</dbReference>
<dbReference type="PANTHER" id="PTHR23192">
    <property type="entry name" value="OLFACTOMEDIN-RELATED"/>
    <property type="match status" value="1"/>
</dbReference>
<dbReference type="Pfam" id="PF02191">
    <property type="entry name" value="OLF"/>
    <property type="match status" value="1"/>
</dbReference>
<dbReference type="SMART" id="SM00284">
    <property type="entry name" value="OLF"/>
    <property type="match status" value="1"/>
</dbReference>
<dbReference type="PROSITE" id="PS51132">
    <property type="entry name" value="OLF"/>
    <property type="match status" value="1"/>
</dbReference>
<name>OLM2A_PIG</name>
<comment type="subunit">
    <text evidence="1">Homodimer. Binds to heparin and chondroitin sulfate E.</text>
</comment>
<comment type="subcellular location">
    <subcellularLocation>
        <location evidence="1">Secreted</location>
    </subcellularLocation>
</comment>
<comment type="PTM">
    <text evidence="1">O-glycosylated but not N-glycosylated.</text>
</comment>
<comment type="PTM">
    <text evidence="1">May be cleaved at Lys-301 after secretion.</text>
</comment>
<comment type="sequence caution" evidence="5">
    <conflict type="erroneous gene model prediction">
        <sequence resource="EMBL-CDS" id="BAF45333"/>
    </conflict>
</comment>
<proteinExistence type="inferred from homology"/>
<protein>
    <recommendedName>
        <fullName>Olfactomedin-like protein 2A</fullName>
    </recommendedName>
</protein>
<reference key="1">
    <citation type="journal article" date="2007" name="Genome Res.">
        <title>Fine mapping of a swine quantitative trait locus for number of vertebrae and analysis of an orphan nuclear receptor, germ cell nuclear factor (NR6A1).</title>
        <authorList>
            <person name="Mikawa S."/>
            <person name="Morozumi T."/>
            <person name="Shimanuki S."/>
            <person name="Hayashi T."/>
            <person name="Uenishi H."/>
            <person name="Domukai M."/>
            <person name="Okumura N."/>
            <person name="Awata T."/>
        </authorList>
    </citation>
    <scope>NUCLEOTIDE SEQUENCE [GENOMIC DNA]</scope>
    <source>
        <strain>Large white X Landrace X Duroc</strain>
    </source>
</reference>
<reference key="2">
    <citation type="submission" date="2009-11" db="EMBL/GenBank/DDBJ databases">
        <authorList>
            <consortium name="Porcine genome sequencing project"/>
        </authorList>
    </citation>
    <scope>NUCLEOTIDE SEQUENCE [LARGE SCALE GENOMIC DNA]</scope>
</reference>
<evidence type="ECO:0000250" key="1">
    <source>
        <dbReference type="UniProtKB" id="Q8BHP7"/>
    </source>
</evidence>
<evidence type="ECO:0000255" key="2"/>
<evidence type="ECO:0000255" key="3">
    <source>
        <dbReference type="PROSITE-ProRule" id="PRU00446"/>
    </source>
</evidence>
<evidence type="ECO:0000256" key="4">
    <source>
        <dbReference type="SAM" id="MobiDB-lite"/>
    </source>
</evidence>
<evidence type="ECO:0000305" key="5"/>
<organism>
    <name type="scientific">Sus scrofa</name>
    <name type="common">Pig</name>
    <dbReference type="NCBI Taxonomy" id="9823"/>
    <lineage>
        <taxon>Eukaryota</taxon>
        <taxon>Metazoa</taxon>
        <taxon>Chordata</taxon>
        <taxon>Craniata</taxon>
        <taxon>Vertebrata</taxon>
        <taxon>Euteleostomi</taxon>
        <taxon>Mammalia</taxon>
        <taxon>Eutheria</taxon>
        <taxon>Laurasiatheria</taxon>
        <taxon>Artiodactyla</taxon>
        <taxon>Suina</taxon>
        <taxon>Suidae</taxon>
        <taxon>Sus</taxon>
    </lineage>
</organism>
<keyword id="KW-0175">Coiled coil</keyword>
<keyword id="KW-1015">Disulfide bond</keyword>
<keyword id="KW-0325">Glycoprotein</keyword>
<keyword id="KW-1185">Reference proteome</keyword>
<keyword id="KW-0964">Secreted</keyword>
<keyword id="KW-0732">Signal</keyword>
<sequence length="650" mass="72527">MTAAAVPLRPGPGPLPLLLLPLLLLRAGPVRADSKVFGDVDQVRMTSEGSDCRCKCIMRPLSKDACSRVRSGRARVEDFYTVETVSSGTDCRCSCTAPPSSLNPCENEWKMEKLKKQAPELLKLQSMVDLLEGTLYSMDLMKVHAYVHKLASQMNTLEESIKANLSRENEVVRESMRHFSEQLKHYENHSAIMMSIKKELSSLGLQLLQKDAASVPGAPPATGPGSKAQDTAGGKGKDSNKHGSVQKTFVDKGLPRPPKEKLLKAEKLKKEGGKARFPQPTAKPRALAQQQAVIRGITYYKAGRKEMTEAMADNALKGTSWLEQLPPRVEGRLPEPNSAERDEAGGPRASEAADLAPGTPASGPTLTPTPTASPLPTEPPSRPEVPSPGREASCEGTLRAVDPPVRHHSYGRHEGAWMKDPAAKDDKIYVTNYYYGNSLVEFRNLENFKQGRWSNMYKLPYNWIGTGHVVYQGAFYNRAFTKNIIKYDLRQRFVASWALLPDVVYEDTTPWKWRGHSDIDFAVDESGLWVIYPAADDRDEAQPEVIVLSRLDPGDLSVHRETTWKTRLRRNSYGNCFLVCGILYAVDTYNQREGHVAYAFDTHTGADARLQLPFLNEHAYTTQIDYNPKERVLYAWDNGHQLTYTLHFVV</sequence>
<accession>A2BD09</accession>
<accession>F1SKR6</accession>
<gene>
    <name type="primary">OLFML2A</name>
</gene>